<sequence>MKKSLTNLDLNLLLCLQLLMQERSVTKAAKRMNVTPSAVSKSLAKLRAWFDDPLFVNTPLGLAPTPLMVSMEQSLADWMQMGNQLLDKPHHQTPRGLKFELAAESPLMMIMFNSLSQQIYQRYPQATIKVRNWDYDSLEAITRGEVDIGFTGRESHPRSRELLSLLPLAIDFEVLFSDLPWVWLREDHPALREAWDLDTFLRYPHISICWEQSDTWALDDVLQEMGRKRHIALSLPGFEQSLFMAAQPDHTLIATAPRYCQHYNQLHQLPLVARPLPFDAQQREKLMVPFTLLWHKRNSHNPKIVWLRQAINTLCRRLI</sequence>
<reference key="1">
    <citation type="journal article" date="2011" name="J. Bacteriol.">
        <title>Comparative genomics of 28 Salmonella enterica isolates: evidence for CRISPR-mediated adaptive sublineage evolution.</title>
        <authorList>
            <person name="Fricke W.F."/>
            <person name="Mammel M.K."/>
            <person name="McDermott P.F."/>
            <person name="Tartera C."/>
            <person name="White D.G."/>
            <person name="Leclerc J.E."/>
            <person name="Ravel J."/>
            <person name="Cebula T.A."/>
        </authorList>
    </citation>
    <scope>NUCLEOTIDE SEQUENCE [LARGE SCALE GENOMIC DNA]</scope>
    <source>
        <strain>SL254</strain>
    </source>
</reference>
<comment type="function">
    <text evidence="1">Involved in anaerobic NO protection.</text>
</comment>
<comment type="similarity">
    <text evidence="2">Belongs to the LysR transcriptional regulatory family.</text>
</comment>
<gene>
    <name evidence="1" type="primary">yidZ</name>
    <name type="ordered locus">SNSL254_A4129</name>
</gene>
<dbReference type="EMBL" id="CP001113">
    <property type="protein sequence ID" value="ACF62508.1"/>
    <property type="molecule type" value="Genomic_DNA"/>
</dbReference>
<dbReference type="RefSeq" id="WP_000749365.1">
    <property type="nucleotide sequence ID" value="NZ_CCMR01000001.1"/>
</dbReference>
<dbReference type="SMR" id="B4SYB4"/>
<dbReference type="KEGG" id="see:SNSL254_A4129"/>
<dbReference type="HOGENOM" id="CLU_039613_39_2_6"/>
<dbReference type="Proteomes" id="UP000008824">
    <property type="component" value="Chromosome"/>
</dbReference>
<dbReference type="GO" id="GO:0003677">
    <property type="term" value="F:DNA binding"/>
    <property type="evidence" value="ECO:0007669"/>
    <property type="project" value="UniProtKB-KW"/>
</dbReference>
<dbReference type="GO" id="GO:0003700">
    <property type="term" value="F:DNA-binding transcription factor activity"/>
    <property type="evidence" value="ECO:0007669"/>
    <property type="project" value="UniProtKB-UniRule"/>
</dbReference>
<dbReference type="CDD" id="cd08417">
    <property type="entry name" value="PBP2_Nitroaromatics_like"/>
    <property type="match status" value="1"/>
</dbReference>
<dbReference type="Gene3D" id="3.40.190.10">
    <property type="entry name" value="Periplasmic binding protein-like II"/>
    <property type="match status" value="2"/>
</dbReference>
<dbReference type="Gene3D" id="1.10.10.10">
    <property type="entry name" value="Winged helix-like DNA-binding domain superfamily/Winged helix DNA-binding domain"/>
    <property type="match status" value="1"/>
</dbReference>
<dbReference type="HAMAP" id="MF_01607">
    <property type="entry name" value="HTH_type_YidZ"/>
    <property type="match status" value="1"/>
</dbReference>
<dbReference type="InterPro" id="IPR050389">
    <property type="entry name" value="LysR-type_TF"/>
</dbReference>
<dbReference type="InterPro" id="IPR005119">
    <property type="entry name" value="LysR_subst-bd"/>
</dbReference>
<dbReference type="InterPro" id="IPR000847">
    <property type="entry name" value="Tscrpt_reg_HTH_LysR"/>
</dbReference>
<dbReference type="InterPro" id="IPR023746">
    <property type="entry name" value="Tscrpt_reg_YidZ"/>
</dbReference>
<dbReference type="InterPro" id="IPR036388">
    <property type="entry name" value="WH-like_DNA-bd_sf"/>
</dbReference>
<dbReference type="InterPro" id="IPR036390">
    <property type="entry name" value="WH_DNA-bd_sf"/>
</dbReference>
<dbReference type="InterPro" id="IPR037402">
    <property type="entry name" value="YidZ_PBP2"/>
</dbReference>
<dbReference type="NCBIfam" id="NF007581">
    <property type="entry name" value="PRK10216.1"/>
    <property type="match status" value="1"/>
</dbReference>
<dbReference type="PANTHER" id="PTHR30118">
    <property type="entry name" value="HTH-TYPE TRANSCRIPTIONAL REGULATOR LEUO-RELATED"/>
    <property type="match status" value="1"/>
</dbReference>
<dbReference type="PANTHER" id="PTHR30118:SF11">
    <property type="entry name" value="HTH-TYPE TRANSCRIPTIONAL REGULATOR YIDZ"/>
    <property type="match status" value="1"/>
</dbReference>
<dbReference type="Pfam" id="PF00126">
    <property type="entry name" value="HTH_1"/>
    <property type="match status" value="1"/>
</dbReference>
<dbReference type="Pfam" id="PF03466">
    <property type="entry name" value="LysR_substrate"/>
    <property type="match status" value="1"/>
</dbReference>
<dbReference type="SUPFAM" id="SSF53850">
    <property type="entry name" value="Periplasmic binding protein-like II"/>
    <property type="match status" value="1"/>
</dbReference>
<dbReference type="SUPFAM" id="SSF46785">
    <property type="entry name" value="Winged helix' DNA-binding domain"/>
    <property type="match status" value="1"/>
</dbReference>
<dbReference type="PROSITE" id="PS50931">
    <property type="entry name" value="HTH_LYSR"/>
    <property type="match status" value="1"/>
</dbReference>
<name>YIDZ_SALNS</name>
<feature type="chain" id="PRO_1000148202" description="HTH-type transcriptional regulator YidZ">
    <location>
        <begin position="1"/>
        <end position="319"/>
    </location>
</feature>
<feature type="domain" description="HTH lysR-type" evidence="1">
    <location>
        <begin position="8"/>
        <end position="65"/>
    </location>
</feature>
<feature type="DNA-binding region" description="H-T-H motif" evidence="1">
    <location>
        <begin position="25"/>
        <end position="44"/>
    </location>
</feature>
<proteinExistence type="inferred from homology"/>
<organism>
    <name type="scientific">Salmonella newport (strain SL254)</name>
    <dbReference type="NCBI Taxonomy" id="423368"/>
    <lineage>
        <taxon>Bacteria</taxon>
        <taxon>Pseudomonadati</taxon>
        <taxon>Pseudomonadota</taxon>
        <taxon>Gammaproteobacteria</taxon>
        <taxon>Enterobacterales</taxon>
        <taxon>Enterobacteriaceae</taxon>
        <taxon>Salmonella</taxon>
    </lineage>
</organism>
<protein>
    <recommendedName>
        <fullName evidence="1">HTH-type transcriptional regulator YidZ</fullName>
    </recommendedName>
</protein>
<evidence type="ECO:0000255" key="1">
    <source>
        <dbReference type="HAMAP-Rule" id="MF_01607"/>
    </source>
</evidence>
<evidence type="ECO:0000305" key="2"/>
<accession>B4SYB4</accession>
<keyword id="KW-0238">DNA-binding</keyword>
<keyword id="KW-0804">Transcription</keyword>
<keyword id="KW-0805">Transcription regulation</keyword>